<comment type="function">
    <text evidence="1">Attaches a formyl group to the free amino group of methionyl-tRNA(fMet). The formyl group appears to play a dual role in the initiator identity of N-formylmethionyl-tRNA by promoting its recognition by IF2 and preventing the misappropriation of this tRNA by the elongation apparatus.</text>
</comment>
<comment type="catalytic activity">
    <reaction evidence="1">
        <text>L-methionyl-tRNA(fMet) + (6R)-10-formyltetrahydrofolate = N-formyl-L-methionyl-tRNA(fMet) + (6S)-5,6,7,8-tetrahydrofolate + H(+)</text>
        <dbReference type="Rhea" id="RHEA:24380"/>
        <dbReference type="Rhea" id="RHEA-COMP:9952"/>
        <dbReference type="Rhea" id="RHEA-COMP:9953"/>
        <dbReference type="ChEBI" id="CHEBI:15378"/>
        <dbReference type="ChEBI" id="CHEBI:57453"/>
        <dbReference type="ChEBI" id="CHEBI:78530"/>
        <dbReference type="ChEBI" id="CHEBI:78844"/>
        <dbReference type="ChEBI" id="CHEBI:195366"/>
        <dbReference type="EC" id="2.1.2.9"/>
    </reaction>
</comment>
<comment type="similarity">
    <text evidence="1">Belongs to the Fmt family.</text>
</comment>
<proteinExistence type="inferred from homology"/>
<name>FMT_VARPS</name>
<evidence type="ECO:0000255" key="1">
    <source>
        <dbReference type="HAMAP-Rule" id="MF_00182"/>
    </source>
</evidence>
<dbReference type="EC" id="2.1.2.9" evidence="1"/>
<dbReference type="EMBL" id="CP001635">
    <property type="protein sequence ID" value="ACS21713.1"/>
    <property type="molecule type" value="Genomic_DNA"/>
</dbReference>
<dbReference type="SMR" id="C5CQE1"/>
<dbReference type="STRING" id="543728.Vapar_5111"/>
<dbReference type="KEGG" id="vap:Vapar_5111"/>
<dbReference type="eggNOG" id="COG0223">
    <property type="taxonomic scope" value="Bacteria"/>
</dbReference>
<dbReference type="HOGENOM" id="CLU_033347_1_2_4"/>
<dbReference type="OrthoDB" id="9802815at2"/>
<dbReference type="GO" id="GO:0005829">
    <property type="term" value="C:cytosol"/>
    <property type="evidence" value="ECO:0007669"/>
    <property type="project" value="TreeGrafter"/>
</dbReference>
<dbReference type="GO" id="GO:0004479">
    <property type="term" value="F:methionyl-tRNA formyltransferase activity"/>
    <property type="evidence" value="ECO:0007669"/>
    <property type="project" value="UniProtKB-UniRule"/>
</dbReference>
<dbReference type="CDD" id="cd08646">
    <property type="entry name" value="FMT_core_Met-tRNA-FMT_N"/>
    <property type="match status" value="1"/>
</dbReference>
<dbReference type="CDD" id="cd08704">
    <property type="entry name" value="Met_tRNA_FMT_C"/>
    <property type="match status" value="1"/>
</dbReference>
<dbReference type="Gene3D" id="3.10.25.10">
    <property type="entry name" value="Formyl transferase, C-terminal domain"/>
    <property type="match status" value="1"/>
</dbReference>
<dbReference type="Gene3D" id="3.40.50.170">
    <property type="entry name" value="Formyl transferase, N-terminal domain"/>
    <property type="match status" value="1"/>
</dbReference>
<dbReference type="HAMAP" id="MF_00182">
    <property type="entry name" value="Formyl_trans"/>
    <property type="match status" value="1"/>
</dbReference>
<dbReference type="InterPro" id="IPR005794">
    <property type="entry name" value="Fmt"/>
</dbReference>
<dbReference type="InterPro" id="IPR005793">
    <property type="entry name" value="Formyl_trans_C"/>
</dbReference>
<dbReference type="InterPro" id="IPR037022">
    <property type="entry name" value="Formyl_trans_C_sf"/>
</dbReference>
<dbReference type="InterPro" id="IPR002376">
    <property type="entry name" value="Formyl_transf_N"/>
</dbReference>
<dbReference type="InterPro" id="IPR036477">
    <property type="entry name" value="Formyl_transf_N_sf"/>
</dbReference>
<dbReference type="InterPro" id="IPR011034">
    <property type="entry name" value="Formyl_transferase-like_C_sf"/>
</dbReference>
<dbReference type="InterPro" id="IPR001555">
    <property type="entry name" value="GART_AS"/>
</dbReference>
<dbReference type="InterPro" id="IPR044135">
    <property type="entry name" value="Met-tRNA-FMT_C"/>
</dbReference>
<dbReference type="InterPro" id="IPR041711">
    <property type="entry name" value="Met-tRNA-FMT_N"/>
</dbReference>
<dbReference type="NCBIfam" id="TIGR00460">
    <property type="entry name" value="fmt"/>
    <property type="match status" value="1"/>
</dbReference>
<dbReference type="PANTHER" id="PTHR11138">
    <property type="entry name" value="METHIONYL-TRNA FORMYLTRANSFERASE"/>
    <property type="match status" value="1"/>
</dbReference>
<dbReference type="PANTHER" id="PTHR11138:SF5">
    <property type="entry name" value="METHIONYL-TRNA FORMYLTRANSFERASE, MITOCHONDRIAL"/>
    <property type="match status" value="1"/>
</dbReference>
<dbReference type="Pfam" id="PF02911">
    <property type="entry name" value="Formyl_trans_C"/>
    <property type="match status" value="1"/>
</dbReference>
<dbReference type="Pfam" id="PF00551">
    <property type="entry name" value="Formyl_trans_N"/>
    <property type="match status" value="1"/>
</dbReference>
<dbReference type="SUPFAM" id="SSF50486">
    <property type="entry name" value="FMT C-terminal domain-like"/>
    <property type="match status" value="1"/>
</dbReference>
<dbReference type="SUPFAM" id="SSF53328">
    <property type="entry name" value="Formyltransferase"/>
    <property type="match status" value="1"/>
</dbReference>
<dbReference type="PROSITE" id="PS00373">
    <property type="entry name" value="GART"/>
    <property type="match status" value="1"/>
</dbReference>
<gene>
    <name evidence="1" type="primary">fmt</name>
    <name type="ordered locus">Vapar_5111</name>
</gene>
<reference key="1">
    <citation type="journal article" date="2011" name="J. Bacteriol.">
        <title>Complete genome sequence of the metabolically versatile plant growth-promoting endophyte, Variovorax paradoxus S110.</title>
        <authorList>
            <person name="Han J.I."/>
            <person name="Choi H.K."/>
            <person name="Lee S.W."/>
            <person name="Orwin P.M."/>
            <person name="Kim J."/>
            <person name="Laroe S.L."/>
            <person name="Kim T.G."/>
            <person name="O'Neil J."/>
            <person name="Leadbetter J.R."/>
            <person name="Lee S.Y."/>
            <person name="Hur C.G."/>
            <person name="Spain J.C."/>
            <person name="Ovchinnikova G."/>
            <person name="Goodwin L."/>
            <person name="Han C."/>
        </authorList>
    </citation>
    <scope>NUCLEOTIDE SEQUENCE [LARGE SCALE GENOMIC DNA]</scope>
    <source>
        <strain>S110</strain>
    </source>
</reference>
<feature type="chain" id="PRO_1000203880" description="Methionyl-tRNA formyltransferase">
    <location>
        <begin position="1"/>
        <end position="318"/>
    </location>
</feature>
<feature type="binding site" evidence="1">
    <location>
        <begin position="120"/>
        <end position="123"/>
    </location>
    <ligand>
        <name>(6S)-5,6,7,8-tetrahydrofolate</name>
        <dbReference type="ChEBI" id="CHEBI:57453"/>
    </ligand>
</feature>
<accession>C5CQE1</accession>
<sequence length="318" mass="33487">MTPLKVVFAGTPEFARAALEAIAAAGHEIALVLSQPDRPAGRGMKLQASPVKQCAVAHGWPVAQPRSLRLDGKYPQDAAAAREALLAARPDVMVVAAYGLILPQWVLDLPVHGCLNIHASLLPRWRGAAPIHRAIEAGDAQTGITIMQMDAGLDTGDMLLREAVDIGSDTTARLHDRLAELGGRLIVQALADIGRLARTPQPAEGVTYASKVEKHEAQIDWNQPADAIVRRIRAFDPFPGANSLLDGETIKLWAAHAAPPAEVSAAPGTLLAVSDAGVAVAAAGSVVMATELQRPGGKRLAVADFLRGFDLKPGQRFG</sequence>
<protein>
    <recommendedName>
        <fullName evidence="1">Methionyl-tRNA formyltransferase</fullName>
        <ecNumber evidence="1">2.1.2.9</ecNumber>
    </recommendedName>
</protein>
<keyword id="KW-0648">Protein biosynthesis</keyword>
<keyword id="KW-0808">Transferase</keyword>
<organism>
    <name type="scientific">Variovorax paradoxus (strain S110)</name>
    <dbReference type="NCBI Taxonomy" id="543728"/>
    <lineage>
        <taxon>Bacteria</taxon>
        <taxon>Pseudomonadati</taxon>
        <taxon>Pseudomonadota</taxon>
        <taxon>Betaproteobacteria</taxon>
        <taxon>Burkholderiales</taxon>
        <taxon>Comamonadaceae</taxon>
        <taxon>Variovorax</taxon>
    </lineage>
</organism>